<dbReference type="EC" id="3.1.26.5" evidence="1"/>
<dbReference type="EMBL" id="CP000282">
    <property type="protein sequence ID" value="ABD83271.1"/>
    <property type="molecule type" value="Genomic_DNA"/>
</dbReference>
<dbReference type="SMR" id="Q21DF8"/>
<dbReference type="STRING" id="203122.Sde_4016"/>
<dbReference type="KEGG" id="sde:Sde_4016"/>
<dbReference type="eggNOG" id="COG0594">
    <property type="taxonomic scope" value="Bacteria"/>
</dbReference>
<dbReference type="HOGENOM" id="CLU_117179_11_0_6"/>
<dbReference type="OrthoDB" id="9796422at2"/>
<dbReference type="Proteomes" id="UP000001947">
    <property type="component" value="Chromosome"/>
</dbReference>
<dbReference type="GO" id="GO:0030677">
    <property type="term" value="C:ribonuclease P complex"/>
    <property type="evidence" value="ECO:0007669"/>
    <property type="project" value="TreeGrafter"/>
</dbReference>
<dbReference type="GO" id="GO:0042781">
    <property type="term" value="F:3'-tRNA processing endoribonuclease activity"/>
    <property type="evidence" value="ECO:0007669"/>
    <property type="project" value="TreeGrafter"/>
</dbReference>
<dbReference type="GO" id="GO:0004526">
    <property type="term" value="F:ribonuclease P activity"/>
    <property type="evidence" value="ECO:0007669"/>
    <property type="project" value="UniProtKB-UniRule"/>
</dbReference>
<dbReference type="GO" id="GO:0000049">
    <property type="term" value="F:tRNA binding"/>
    <property type="evidence" value="ECO:0007669"/>
    <property type="project" value="UniProtKB-UniRule"/>
</dbReference>
<dbReference type="GO" id="GO:0001682">
    <property type="term" value="P:tRNA 5'-leader removal"/>
    <property type="evidence" value="ECO:0007669"/>
    <property type="project" value="UniProtKB-UniRule"/>
</dbReference>
<dbReference type="Gene3D" id="3.30.230.10">
    <property type="match status" value="1"/>
</dbReference>
<dbReference type="HAMAP" id="MF_00227">
    <property type="entry name" value="RNase_P"/>
    <property type="match status" value="1"/>
</dbReference>
<dbReference type="InterPro" id="IPR020568">
    <property type="entry name" value="Ribosomal_Su5_D2-typ_SF"/>
</dbReference>
<dbReference type="InterPro" id="IPR014721">
    <property type="entry name" value="Ribsml_uS5_D2-typ_fold_subgr"/>
</dbReference>
<dbReference type="InterPro" id="IPR000100">
    <property type="entry name" value="RNase_P"/>
</dbReference>
<dbReference type="InterPro" id="IPR020539">
    <property type="entry name" value="RNase_P_CS"/>
</dbReference>
<dbReference type="NCBIfam" id="TIGR00188">
    <property type="entry name" value="rnpA"/>
    <property type="match status" value="1"/>
</dbReference>
<dbReference type="PANTHER" id="PTHR33992">
    <property type="entry name" value="RIBONUCLEASE P PROTEIN COMPONENT"/>
    <property type="match status" value="1"/>
</dbReference>
<dbReference type="PANTHER" id="PTHR33992:SF1">
    <property type="entry name" value="RIBONUCLEASE P PROTEIN COMPONENT"/>
    <property type="match status" value="1"/>
</dbReference>
<dbReference type="Pfam" id="PF00825">
    <property type="entry name" value="Ribonuclease_P"/>
    <property type="match status" value="1"/>
</dbReference>
<dbReference type="SUPFAM" id="SSF54211">
    <property type="entry name" value="Ribosomal protein S5 domain 2-like"/>
    <property type="match status" value="1"/>
</dbReference>
<dbReference type="PROSITE" id="PS00648">
    <property type="entry name" value="RIBONUCLEASE_P"/>
    <property type="match status" value="1"/>
</dbReference>
<name>RNPA_SACD2</name>
<reference key="1">
    <citation type="journal article" date="2008" name="PLoS Genet.">
        <title>Complete genome sequence of the complex carbohydrate-degrading marine bacterium, Saccharophagus degradans strain 2-40 T.</title>
        <authorList>
            <person name="Weiner R.M."/>
            <person name="Taylor L.E. II"/>
            <person name="Henrissat B."/>
            <person name="Hauser L."/>
            <person name="Land M."/>
            <person name="Coutinho P.M."/>
            <person name="Rancurel C."/>
            <person name="Saunders E.H."/>
            <person name="Longmire A.G."/>
            <person name="Zhang H."/>
            <person name="Bayer E.A."/>
            <person name="Gilbert H.J."/>
            <person name="Larimer F."/>
            <person name="Zhulin I.B."/>
            <person name="Ekborg N.A."/>
            <person name="Lamed R."/>
            <person name="Richardson P.M."/>
            <person name="Borovok I."/>
            <person name="Hutcheson S."/>
        </authorList>
    </citation>
    <scope>NUCLEOTIDE SEQUENCE [LARGE SCALE GENOMIC DNA]</scope>
    <source>
        <strain>2-40 / ATCC 43961 / DSM 17024</strain>
    </source>
</reference>
<feature type="chain" id="PRO_1000021454" description="Ribonuclease P protein component">
    <location>
        <begin position="1"/>
        <end position="135"/>
    </location>
</feature>
<protein>
    <recommendedName>
        <fullName evidence="1">Ribonuclease P protein component</fullName>
        <shortName evidence="1">RNase P protein</shortName>
        <shortName evidence="1">RNaseP protein</shortName>
        <ecNumber evidence="1">3.1.26.5</ecNumber>
    </recommendedName>
    <alternativeName>
        <fullName evidence="1">Protein C5</fullName>
    </alternativeName>
</protein>
<proteinExistence type="inferred from homology"/>
<keyword id="KW-0255">Endonuclease</keyword>
<keyword id="KW-0378">Hydrolase</keyword>
<keyword id="KW-0540">Nuclease</keyword>
<keyword id="KW-1185">Reference proteome</keyword>
<keyword id="KW-0694">RNA-binding</keyword>
<keyword id="KW-0819">tRNA processing</keyword>
<evidence type="ECO:0000255" key="1">
    <source>
        <dbReference type="HAMAP-Rule" id="MF_00227"/>
    </source>
</evidence>
<gene>
    <name evidence="1" type="primary">rnpA</name>
    <name type="ordered locus">Sde_4016</name>
</gene>
<sequence length="135" mass="15262">MSASPKERCFSFGKDQRLLNSSDFTPVFNDAPIRASNSEILILCKLSTTGKARLGLVVAKKNIKHANKRNQFKRIARESFRLKQHKLPPIDAIVLARRGADSLSKVELRRMFDGLWKRVVKKAEKLTATQPEKTG</sequence>
<comment type="function">
    <text evidence="1">RNaseP catalyzes the removal of the 5'-leader sequence from pre-tRNA to produce the mature 5'-terminus. It can also cleave other RNA substrates such as 4.5S RNA. The protein component plays an auxiliary but essential role in vivo by binding to the 5'-leader sequence and broadening the substrate specificity of the ribozyme.</text>
</comment>
<comment type="catalytic activity">
    <reaction evidence="1">
        <text>Endonucleolytic cleavage of RNA, removing 5'-extranucleotides from tRNA precursor.</text>
        <dbReference type="EC" id="3.1.26.5"/>
    </reaction>
</comment>
<comment type="subunit">
    <text evidence="1">Consists of a catalytic RNA component (M1 or rnpB) and a protein subunit.</text>
</comment>
<comment type="similarity">
    <text evidence="1">Belongs to the RnpA family.</text>
</comment>
<organism>
    <name type="scientific">Saccharophagus degradans (strain 2-40 / ATCC 43961 / DSM 17024)</name>
    <dbReference type="NCBI Taxonomy" id="203122"/>
    <lineage>
        <taxon>Bacteria</taxon>
        <taxon>Pseudomonadati</taxon>
        <taxon>Pseudomonadota</taxon>
        <taxon>Gammaproteobacteria</taxon>
        <taxon>Cellvibrionales</taxon>
        <taxon>Cellvibrionaceae</taxon>
        <taxon>Saccharophagus</taxon>
    </lineage>
</organism>
<accession>Q21DF8</accession>